<keyword id="KW-0004">4Fe-4S</keyword>
<keyword id="KW-0997">Cell inner membrane</keyword>
<keyword id="KW-1003">Cell membrane</keyword>
<keyword id="KW-0408">Iron</keyword>
<keyword id="KW-0411">Iron-sulfur</keyword>
<keyword id="KW-0472">Membrane</keyword>
<keyword id="KW-0479">Metal-binding</keyword>
<keyword id="KW-0520">NAD</keyword>
<keyword id="KW-0874">Quinone</keyword>
<keyword id="KW-1185">Reference proteome</keyword>
<keyword id="KW-0677">Repeat</keyword>
<keyword id="KW-1278">Translocase</keyword>
<keyword id="KW-0830">Ubiquinone</keyword>
<comment type="function">
    <text evidence="1">NDH-1 shuttles electrons from NADH, via FMN and iron-sulfur (Fe-S) centers, to quinones in the respiratory chain. The immediate electron acceptor for the enzyme in this species is believed to be ubiquinone. Couples the redox reaction to proton translocation (for every two electrons transferred, four hydrogen ions are translocated across the cytoplasmic membrane), and thus conserves the redox energy in a proton gradient.</text>
</comment>
<comment type="catalytic activity">
    <reaction evidence="1">
        <text>a quinone + NADH + 5 H(+)(in) = a quinol + NAD(+) + 4 H(+)(out)</text>
        <dbReference type="Rhea" id="RHEA:57888"/>
        <dbReference type="ChEBI" id="CHEBI:15378"/>
        <dbReference type="ChEBI" id="CHEBI:24646"/>
        <dbReference type="ChEBI" id="CHEBI:57540"/>
        <dbReference type="ChEBI" id="CHEBI:57945"/>
        <dbReference type="ChEBI" id="CHEBI:132124"/>
    </reaction>
</comment>
<comment type="cofactor">
    <cofactor evidence="1">
        <name>[4Fe-4S] cluster</name>
        <dbReference type="ChEBI" id="CHEBI:49883"/>
    </cofactor>
    <text evidence="1">Binds 2 [4Fe-4S] clusters per subunit.</text>
</comment>
<comment type="subunit">
    <text evidence="1">NDH-1 is composed of 14 different subunits. Subunits NuoA, H, J, K, L, M, N constitute the membrane sector of the complex.</text>
</comment>
<comment type="subcellular location">
    <subcellularLocation>
        <location evidence="1">Cell inner membrane</location>
        <topology evidence="1">Peripheral membrane protein</topology>
    </subcellularLocation>
</comment>
<comment type="similarity">
    <text evidence="1">Belongs to the complex I 23 kDa subunit family.</text>
</comment>
<organism>
    <name type="scientific">Maricaulis maris (strain MCS10)</name>
    <name type="common">Caulobacter maris</name>
    <dbReference type="NCBI Taxonomy" id="394221"/>
    <lineage>
        <taxon>Bacteria</taxon>
        <taxon>Pseudomonadati</taxon>
        <taxon>Pseudomonadota</taxon>
        <taxon>Alphaproteobacteria</taxon>
        <taxon>Maricaulales</taxon>
        <taxon>Maricaulaceae</taxon>
        <taxon>Maricaulis</taxon>
    </lineage>
</organism>
<dbReference type="EC" id="7.1.1.-" evidence="1"/>
<dbReference type="EMBL" id="CP000449">
    <property type="protein sequence ID" value="ABI65655.1"/>
    <property type="molecule type" value="Genomic_DNA"/>
</dbReference>
<dbReference type="RefSeq" id="WP_011643302.1">
    <property type="nucleotide sequence ID" value="NC_008347.1"/>
</dbReference>
<dbReference type="SMR" id="Q0APY2"/>
<dbReference type="STRING" id="394221.Mmar10_1363"/>
<dbReference type="KEGG" id="mmr:Mmar10_1363"/>
<dbReference type="eggNOG" id="COG1143">
    <property type="taxonomic scope" value="Bacteria"/>
</dbReference>
<dbReference type="HOGENOM" id="CLU_067218_5_1_5"/>
<dbReference type="OrthoDB" id="9808559at2"/>
<dbReference type="Proteomes" id="UP000001964">
    <property type="component" value="Chromosome"/>
</dbReference>
<dbReference type="GO" id="GO:0005886">
    <property type="term" value="C:plasma membrane"/>
    <property type="evidence" value="ECO:0007669"/>
    <property type="project" value="UniProtKB-SubCell"/>
</dbReference>
<dbReference type="GO" id="GO:0051539">
    <property type="term" value="F:4 iron, 4 sulfur cluster binding"/>
    <property type="evidence" value="ECO:0007669"/>
    <property type="project" value="UniProtKB-KW"/>
</dbReference>
<dbReference type="GO" id="GO:0005506">
    <property type="term" value="F:iron ion binding"/>
    <property type="evidence" value="ECO:0007669"/>
    <property type="project" value="UniProtKB-UniRule"/>
</dbReference>
<dbReference type="GO" id="GO:0050136">
    <property type="term" value="F:NADH:ubiquinone reductase (non-electrogenic) activity"/>
    <property type="evidence" value="ECO:0007669"/>
    <property type="project" value="UniProtKB-UniRule"/>
</dbReference>
<dbReference type="GO" id="GO:0048038">
    <property type="term" value="F:quinone binding"/>
    <property type="evidence" value="ECO:0007669"/>
    <property type="project" value="UniProtKB-KW"/>
</dbReference>
<dbReference type="GO" id="GO:0009060">
    <property type="term" value="P:aerobic respiration"/>
    <property type="evidence" value="ECO:0007669"/>
    <property type="project" value="TreeGrafter"/>
</dbReference>
<dbReference type="FunFam" id="3.30.70.3270:FF:000001">
    <property type="entry name" value="NADH-quinone oxidoreductase subunit I 1"/>
    <property type="match status" value="1"/>
</dbReference>
<dbReference type="Gene3D" id="3.30.70.3270">
    <property type="match status" value="1"/>
</dbReference>
<dbReference type="HAMAP" id="MF_01351">
    <property type="entry name" value="NDH1_NuoI"/>
    <property type="match status" value="1"/>
</dbReference>
<dbReference type="InterPro" id="IPR017896">
    <property type="entry name" value="4Fe4S_Fe-S-bd"/>
</dbReference>
<dbReference type="InterPro" id="IPR017900">
    <property type="entry name" value="4Fe4S_Fe_S_CS"/>
</dbReference>
<dbReference type="InterPro" id="IPR010226">
    <property type="entry name" value="NADH_quinone_OxRdtase_chainI"/>
</dbReference>
<dbReference type="NCBIfam" id="TIGR01971">
    <property type="entry name" value="NuoI"/>
    <property type="match status" value="1"/>
</dbReference>
<dbReference type="NCBIfam" id="NF004538">
    <property type="entry name" value="PRK05888.1-4"/>
    <property type="match status" value="1"/>
</dbReference>
<dbReference type="NCBIfam" id="NF004539">
    <property type="entry name" value="PRK05888.1-5"/>
    <property type="match status" value="1"/>
</dbReference>
<dbReference type="PANTHER" id="PTHR10849:SF20">
    <property type="entry name" value="NADH DEHYDROGENASE [UBIQUINONE] IRON-SULFUR PROTEIN 8, MITOCHONDRIAL"/>
    <property type="match status" value="1"/>
</dbReference>
<dbReference type="PANTHER" id="PTHR10849">
    <property type="entry name" value="NADH DEHYDROGENASE UBIQUINONE IRON-SULFUR PROTEIN 8, MITOCHONDRIAL"/>
    <property type="match status" value="1"/>
</dbReference>
<dbReference type="Pfam" id="PF12838">
    <property type="entry name" value="Fer4_7"/>
    <property type="match status" value="1"/>
</dbReference>
<dbReference type="SUPFAM" id="SSF54862">
    <property type="entry name" value="4Fe-4S ferredoxins"/>
    <property type="match status" value="1"/>
</dbReference>
<dbReference type="PROSITE" id="PS00198">
    <property type="entry name" value="4FE4S_FER_1"/>
    <property type="match status" value="2"/>
</dbReference>
<dbReference type="PROSITE" id="PS51379">
    <property type="entry name" value="4FE4S_FER_2"/>
    <property type="match status" value="2"/>
</dbReference>
<accession>Q0APY2</accession>
<name>NUOI_MARMM</name>
<feature type="chain" id="PRO_0000298508" description="NADH-quinone oxidoreductase subunit I">
    <location>
        <begin position="1"/>
        <end position="162"/>
    </location>
</feature>
<feature type="domain" description="4Fe-4S ferredoxin-type 1" evidence="1">
    <location>
        <begin position="53"/>
        <end position="83"/>
    </location>
</feature>
<feature type="domain" description="4Fe-4S ferredoxin-type 2" evidence="1">
    <location>
        <begin position="93"/>
        <end position="122"/>
    </location>
</feature>
<feature type="binding site" evidence="1">
    <location>
        <position position="63"/>
    </location>
    <ligand>
        <name>[4Fe-4S] cluster</name>
        <dbReference type="ChEBI" id="CHEBI:49883"/>
        <label>1</label>
    </ligand>
</feature>
<feature type="binding site" evidence="1">
    <location>
        <position position="66"/>
    </location>
    <ligand>
        <name>[4Fe-4S] cluster</name>
        <dbReference type="ChEBI" id="CHEBI:49883"/>
        <label>1</label>
    </ligand>
</feature>
<feature type="binding site" evidence="1">
    <location>
        <position position="69"/>
    </location>
    <ligand>
        <name>[4Fe-4S] cluster</name>
        <dbReference type="ChEBI" id="CHEBI:49883"/>
        <label>1</label>
    </ligand>
</feature>
<feature type="binding site" evidence="1">
    <location>
        <position position="73"/>
    </location>
    <ligand>
        <name>[4Fe-4S] cluster</name>
        <dbReference type="ChEBI" id="CHEBI:49883"/>
        <label>2</label>
    </ligand>
</feature>
<feature type="binding site" evidence="1">
    <location>
        <position position="102"/>
    </location>
    <ligand>
        <name>[4Fe-4S] cluster</name>
        <dbReference type="ChEBI" id="CHEBI:49883"/>
        <label>2</label>
    </ligand>
</feature>
<feature type="binding site" evidence="1">
    <location>
        <position position="105"/>
    </location>
    <ligand>
        <name>[4Fe-4S] cluster</name>
        <dbReference type="ChEBI" id="CHEBI:49883"/>
        <label>2</label>
    </ligand>
</feature>
<feature type="binding site" evidence="1">
    <location>
        <position position="108"/>
    </location>
    <ligand>
        <name>[4Fe-4S] cluster</name>
        <dbReference type="ChEBI" id="CHEBI:49883"/>
        <label>2</label>
    </ligand>
</feature>
<feature type="binding site" evidence="1">
    <location>
        <position position="112"/>
    </location>
    <ligand>
        <name>[4Fe-4S] cluster</name>
        <dbReference type="ChEBI" id="CHEBI:49883"/>
        <label>1</label>
    </ligand>
</feature>
<reference key="1">
    <citation type="submission" date="2006-08" db="EMBL/GenBank/DDBJ databases">
        <title>Complete sequence of Maricaulis maris MCS10.</title>
        <authorList>
            <consortium name="US DOE Joint Genome Institute"/>
            <person name="Copeland A."/>
            <person name="Lucas S."/>
            <person name="Lapidus A."/>
            <person name="Barry K."/>
            <person name="Detter J.C."/>
            <person name="Glavina del Rio T."/>
            <person name="Hammon N."/>
            <person name="Israni S."/>
            <person name="Dalin E."/>
            <person name="Tice H."/>
            <person name="Pitluck S."/>
            <person name="Saunders E."/>
            <person name="Brettin T."/>
            <person name="Bruce D."/>
            <person name="Han C."/>
            <person name="Tapia R."/>
            <person name="Gilna P."/>
            <person name="Schmutz J."/>
            <person name="Larimer F."/>
            <person name="Land M."/>
            <person name="Hauser L."/>
            <person name="Kyrpides N."/>
            <person name="Mikhailova N."/>
            <person name="Viollier P."/>
            <person name="Stephens C."/>
            <person name="Richardson P."/>
        </authorList>
    </citation>
    <scope>NUCLEOTIDE SEQUENCE [LARGE SCALE GENOMIC DNA]</scope>
    <source>
        <strain>MCS10</strain>
    </source>
</reference>
<evidence type="ECO:0000255" key="1">
    <source>
        <dbReference type="HAMAP-Rule" id="MF_01351"/>
    </source>
</evidence>
<protein>
    <recommendedName>
        <fullName evidence="1">NADH-quinone oxidoreductase subunit I</fullName>
        <ecNumber evidence="1">7.1.1.-</ecNumber>
    </recommendedName>
    <alternativeName>
        <fullName evidence="1">NADH dehydrogenase I subunit I</fullName>
    </alternativeName>
    <alternativeName>
        <fullName evidence="1">NDH-1 subunit I</fullName>
    </alternativeName>
</protein>
<gene>
    <name evidence="1" type="primary">nuoI</name>
    <name type="ordered locus">Mmar10_1363</name>
</gene>
<sequence>MGRIQQAFRGALLMDFWSAFGLGMRYFFAKKATLNYPFEKGPLSPRFRGQHALRRYANGEERCIACKLCEAICPAQAITIEAEPRSDGSRRTTRYDIDMTKCIYCGYCQEACPVDAIVEGPNFEFAAETREELFYDKAKLLENGDRWEREIAKNLELDAPYR</sequence>
<proteinExistence type="inferred from homology"/>